<comment type="function">
    <text evidence="1">Condenses 4-methyl-5-(beta-hydroxyethyl)thiazole monophosphate (THZ-P) and 2-methyl-4-amino-5-hydroxymethyl pyrimidine pyrophosphate (HMP-PP) to form thiamine monophosphate (TMP).</text>
</comment>
<comment type="catalytic activity">
    <reaction evidence="1">
        <text>2-[(2R,5Z)-2-carboxy-4-methylthiazol-5(2H)-ylidene]ethyl phosphate + 4-amino-2-methyl-5-(diphosphooxymethyl)pyrimidine + 2 H(+) = thiamine phosphate + CO2 + diphosphate</text>
        <dbReference type="Rhea" id="RHEA:47844"/>
        <dbReference type="ChEBI" id="CHEBI:15378"/>
        <dbReference type="ChEBI" id="CHEBI:16526"/>
        <dbReference type="ChEBI" id="CHEBI:33019"/>
        <dbReference type="ChEBI" id="CHEBI:37575"/>
        <dbReference type="ChEBI" id="CHEBI:57841"/>
        <dbReference type="ChEBI" id="CHEBI:62899"/>
        <dbReference type="EC" id="2.5.1.3"/>
    </reaction>
</comment>
<comment type="catalytic activity">
    <reaction evidence="1">
        <text>2-(2-carboxy-4-methylthiazol-5-yl)ethyl phosphate + 4-amino-2-methyl-5-(diphosphooxymethyl)pyrimidine + 2 H(+) = thiamine phosphate + CO2 + diphosphate</text>
        <dbReference type="Rhea" id="RHEA:47848"/>
        <dbReference type="ChEBI" id="CHEBI:15378"/>
        <dbReference type="ChEBI" id="CHEBI:16526"/>
        <dbReference type="ChEBI" id="CHEBI:33019"/>
        <dbReference type="ChEBI" id="CHEBI:37575"/>
        <dbReference type="ChEBI" id="CHEBI:57841"/>
        <dbReference type="ChEBI" id="CHEBI:62890"/>
        <dbReference type="EC" id="2.5.1.3"/>
    </reaction>
</comment>
<comment type="catalytic activity">
    <reaction evidence="1">
        <text>4-methyl-5-(2-phosphooxyethyl)-thiazole + 4-amino-2-methyl-5-(diphosphooxymethyl)pyrimidine + H(+) = thiamine phosphate + diphosphate</text>
        <dbReference type="Rhea" id="RHEA:22328"/>
        <dbReference type="ChEBI" id="CHEBI:15378"/>
        <dbReference type="ChEBI" id="CHEBI:33019"/>
        <dbReference type="ChEBI" id="CHEBI:37575"/>
        <dbReference type="ChEBI" id="CHEBI:57841"/>
        <dbReference type="ChEBI" id="CHEBI:58296"/>
        <dbReference type="EC" id="2.5.1.3"/>
    </reaction>
</comment>
<comment type="cofactor">
    <cofactor evidence="1">
        <name>Mg(2+)</name>
        <dbReference type="ChEBI" id="CHEBI:18420"/>
    </cofactor>
    <text evidence="1">Binds 1 Mg(2+) ion per subunit.</text>
</comment>
<comment type="pathway">
    <text evidence="1">Cofactor biosynthesis; thiamine diphosphate biosynthesis; thiamine phosphate from 4-amino-2-methyl-5-diphosphomethylpyrimidine and 4-methyl-5-(2-phosphoethyl)-thiazole: step 1/1.</text>
</comment>
<comment type="similarity">
    <text evidence="1">Belongs to the thiamine-phosphate synthase family.</text>
</comment>
<comment type="sequence caution" evidence="2">
    <conflict type="erroneous initiation">
        <sequence resource="EMBL-CDS" id="AFP37254"/>
    </conflict>
    <text>Extended N-terminus.</text>
</comment>
<feature type="chain" id="PRO_0000336408" description="Thiamine-phosphate synthase">
    <location>
        <begin position="1"/>
        <end position="227"/>
    </location>
</feature>
<feature type="binding site" evidence="1">
    <location>
        <begin position="46"/>
        <end position="50"/>
    </location>
    <ligand>
        <name>4-amino-2-methyl-5-(diphosphooxymethyl)pyrimidine</name>
        <dbReference type="ChEBI" id="CHEBI:57841"/>
    </ligand>
</feature>
<feature type="binding site" evidence="1">
    <location>
        <position position="87"/>
    </location>
    <ligand>
        <name>4-amino-2-methyl-5-(diphosphooxymethyl)pyrimidine</name>
        <dbReference type="ChEBI" id="CHEBI:57841"/>
    </ligand>
</feature>
<feature type="binding site" evidence="1">
    <location>
        <position position="88"/>
    </location>
    <ligand>
        <name>Mg(2+)</name>
        <dbReference type="ChEBI" id="CHEBI:18420"/>
    </ligand>
</feature>
<feature type="binding site" evidence="1">
    <location>
        <position position="107"/>
    </location>
    <ligand>
        <name>Mg(2+)</name>
        <dbReference type="ChEBI" id="CHEBI:18420"/>
    </ligand>
</feature>
<feature type="binding site" evidence="1">
    <location>
        <position position="126"/>
    </location>
    <ligand>
        <name>4-amino-2-methyl-5-(diphosphooxymethyl)pyrimidine</name>
        <dbReference type="ChEBI" id="CHEBI:57841"/>
    </ligand>
</feature>
<feature type="binding site" evidence="1">
    <location>
        <begin position="152"/>
        <end position="154"/>
    </location>
    <ligand>
        <name>2-[(2R,5Z)-2-carboxy-4-methylthiazol-5(2H)-ylidene]ethyl phosphate</name>
        <dbReference type="ChEBI" id="CHEBI:62899"/>
    </ligand>
</feature>
<feature type="binding site" evidence="1">
    <location>
        <position position="155"/>
    </location>
    <ligand>
        <name>4-amino-2-methyl-5-(diphosphooxymethyl)pyrimidine</name>
        <dbReference type="ChEBI" id="CHEBI:57841"/>
    </ligand>
</feature>
<feature type="binding site" evidence="1">
    <location>
        <position position="183"/>
    </location>
    <ligand>
        <name>2-[(2R,5Z)-2-carboxy-4-methylthiazol-5(2H)-ylidene]ethyl phosphate</name>
        <dbReference type="ChEBI" id="CHEBI:62899"/>
    </ligand>
</feature>
<organism>
    <name type="scientific">Mycolicibacterium smegmatis (strain ATCC 700084 / mc(2)155)</name>
    <name type="common">Mycobacterium smegmatis</name>
    <dbReference type="NCBI Taxonomy" id="246196"/>
    <lineage>
        <taxon>Bacteria</taxon>
        <taxon>Bacillati</taxon>
        <taxon>Actinomycetota</taxon>
        <taxon>Actinomycetes</taxon>
        <taxon>Mycobacteriales</taxon>
        <taxon>Mycobacteriaceae</taxon>
        <taxon>Mycolicibacterium</taxon>
    </lineage>
</organism>
<protein>
    <recommendedName>
        <fullName evidence="1">Thiamine-phosphate synthase</fullName>
        <shortName evidence="1">TP synthase</shortName>
        <shortName evidence="1">TPS</shortName>
        <ecNumber evidence="1">2.5.1.3</ecNumber>
    </recommendedName>
    <alternativeName>
        <fullName evidence="1">Thiamine-phosphate pyrophosphorylase</fullName>
        <shortName evidence="1">TMP pyrophosphorylase</shortName>
        <shortName evidence="1">TMP-PPase</shortName>
    </alternativeName>
</protein>
<dbReference type="EC" id="2.5.1.3" evidence="1"/>
<dbReference type="EMBL" id="CP000480">
    <property type="protein sequence ID" value="ABK70128.1"/>
    <property type="molecule type" value="Genomic_DNA"/>
</dbReference>
<dbReference type="EMBL" id="CP001663">
    <property type="protein sequence ID" value="AFP37254.1"/>
    <property type="status" value="ALT_INIT"/>
    <property type="molecule type" value="Genomic_DNA"/>
</dbReference>
<dbReference type="RefSeq" id="WP_011727194.1">
    <property type="nucleotide sequence ID" value="NZ_SIJM01000036.1"/>
</dbReference>
<dbReference type="RefSeq" id="YP_885195.1">
    <property type="nucleotide sequence ID" value="NC_008596.1"/>
</dbReference>
<dbReference type="SMR" id="A0QQK7"/>
<dbReference type="STRING" id="246196.MSMEG_0789"/>
<dbReference type="PaxDb" id="246196-MSMEI_0774"/>
<dbReference type="GeneID" id="93455700"/>
<dbReference type="KEGG" id="msb:LJ00_03925"/>
<dbReference type="KEGG" id="msg:MSMEI_0774"/>
<dbReference type="KEGG" id="msm:MSMEG_0789"/>
<dbReference type="PATRIC" id="fig|246196.19.peg.785"/>
<dbReference type="eggNOG" id="COG0352">
    <property type="taxonomic scope" value="Bacteria"/>
</dbReference>
<dbReference type="OrthoDB" id="3243336at2"/>
<dbReference type="UniPathway" id="UPA00060">
    <property type="reaction ID" value="UER00141"/>
</dbReference>
<dbReference type="Proteomes" id="UP000000757">
    <property type="component" value="Chromosome"/>
</dbReference>
<dbReference type="Proteomes" id="UP000006158">
    <property type="component" value="Chromosome"/>
</dbReference>
<dbReference type="GO" id="GO:0005737">
    <property type="term" value="C:cytoplasm"/>
    <property type="evidence" value="ECO:0007669"/>
    <property type="project" value="TreeGrafter"/>
</dbReference>
<dbReference type="GO" id="GO:0000287">
    <property type="term" value="F:magnesium ion binding"/>
    <property type="evidence" value="ECO:0007669"/>
    <property type="project" value="UniProtKB-UniRule"/>
</dbReference>
<dbReference type="GO" id="GO:0004789">
    <property type="term" value="F:thiamine-phosphate diphosphorylase activity"/>
    <property type="evidence" value="ECO:0007669"/>
    <property type="project" value="UniProtKB-UniRule"/>
</dbReference>
<dbReference type="GO" id="GO:0009228">
    <property type="term" value="P:thiamine biosynthetic process"/>
    <property type="evidence" value="ECO:0007669"/>
    <property type="project" value="UniProtKB-KW"/>
</dbReference>
<dbReference type="GO" id="GO:0009229">
    <property type="term" value="P:thiamine diphosphate biosynthetic process"/>
    <property type="evidence" value="ECO:0007669"/>
    <property type="project" value="UniProtKB-UniRule"/>
</dbReference>
<dbReference type="CDD" id="cd00564">
    <property type="entry name" value="TMP_TenI"/>
    <property type="match status" value="1"/>
</dbReference>
<dbReference type="FunFam" id="3.20.20.70:FF:000178">
    <property type="entry name" value="Thiamine-phosphate synthase"/>
    <property type="match status" value="1"/>
</dbReference>
<dbReference type="Gene3D" id="3.20.20.70">
    <property type="entry name" value="Aldolase class I"/>
    <property type="match status" value="1"/>
</dbReference>
<dbReference type="HAMAP" id="MF_00097">
    <property type="entry name" value="TMP_synthase"/>
    <property type="match status" value="1"/>
</dbReference>
<dbReference type="InterPro" id="IPR013785">
    <property type="entry name" value="Aldolase_TIM"/>
</dbReference>
<dbReference type="InterPro" id="IPR036206">
    <property type="entry name" value="ThiamineP_synth_sf"/>
</dbReference>
<dbReference type="InterPro" id="IPR022998">
    <property type="entry name" value="ThiamineP_synth_TenI"/>
</dbReference>
<dbReference type="InterPro" id="IPR034291">
    <property type="entry name" value="TMP_synthase"/>
</dbReference>
<dbReference type="NCBIfam" id="TIGR00693">
    <property type="entry name" value="thiE"/>
    <property type="match status" value="1"/>
</dbReference>
<dbReference type="PANTHER" id="PTHR20857">
    <property type="entry name" value="THIAMINE-PHOSPHATE PYROPHOSPHORYLASE"/>
    <property type="match status" value="1"/>
</dbReference>
<dbReference type="PANTHER" id="PTHR20857:SF15">
    <property type="entry name" value="THIAMINE-PHOSPHATE SYNTHASE"/>
    <property type="match status" value="1"/>
</dbReference>
<dbReference type="Pfam" id="PF02581">
    <property type="entry name" value="TMP-TENI"/>
    <property type="match status" value="1"/>
</dbReference>
<dbReference type="SUPFAM" id="SSF51391">
    <property type="entry name" value="Thiamin phosphate synthase"/>
    <property type="match status" value="1"/>
</dbReference>
<gene>
    <name evidence="1" type="primary">thiE</name>
    <name type="ordered locus">MSMEG_0789</name>
    <name type="ordered locus">MSMEI_0774</name>
</gene>
<evidence type="ECO:0000255" key="1">
    <source>
        <dbReference type="HAMAP-Rule" id="MF_00097"/>
    </source>
</evidence>
<evidence type="ECO:0000305" key="2"/>
<sequence>MDQAVELPVQRLQRASLYLCTDARRERGDLAEFADAALAGGVDLIQLRDKGSAGEKQFGPLEARQELEALEILADAARRHGALLAVNDRADIALAAGADVLHLGQDDLPLDVARGIIGRRPVIGRSTHDAAQMAVAIEERVDYFCVGPCWPTPTKPGRPAPGLDLVRATAAHSPGKPWFAIGGIDQERLPEVLAAGARRVVVVRAITAADDPKAAAEDLKAAISAAG</sequence>
<reference key="1">
    <citation type="submission" date="2006-10" db="EMBL/GenBank/DDBJ databases">
        <authorList>
            <person name="Fleischmann R.D."/>
            <person name="Dodson R.J."/>
            <person name="Haft D.H."/>
            <person name="Merkel J.S."/>
            <person name="Nelson W.C."/>
            <person name="Fraser C.M."/>
        </authorList>
    </citation>
    <scope>NUCLEOTIDE SEQUENCE [LARGE SCALE GENOMIC DNA]</scope>
    <source>
        <strain>ATCC 700084 / mc(2)155</strain>
    </source>
</reference>
<reference key="2">
    <citation type="journal article" date="2007" name="Genome Biol.">
        <title>Interrupted coding sequences in Mycobacterium smegmatis: authentic mutations or sequencing errors?</title>
        <authorList>
            <person name="Deshayes C."/>
            <person name="Perrodou E."/>
            <person name="Gallien S."/>
            <person name="Euphrasie D."/>
            <person name="Schaeffer C."/>
            <person name="Van-Dorsselaer A."/>
            <person name="Poch O."/>
            <person name="Lecompte O."/>
            <person name="Reyrat J.-M."/>
        </authorList>
    </citation>
    <scope>NUCLEOTIDE SEQUENCE [LARGE SCALE GENOMIC DNA]</scope>
    <source>
        <strain>ATCC 700084 / mc(2)155</strain>
    </source>
</reference>
<reference key="3">
    <citation type="journal article" date="2009" name="Genome Res.">
        <title>Ortho-proteogenomics: multiple proteomes investigation through orthology and a new MS-based protocol.</title>
        <authorList>
            <person name="Gallien S."/>
            <person name="Perrodou E."/>
            <person name="Carapito C."/>
            <person name="Deshayes C."/>
            <person name="Reyrat J.-M."/>
            <person name="Van Dorsselaer A."/>
            <person name="Poch O."/>
            <person name="Schaeffer C."/>
            <person name="Lecompte O."/>
        </authorList>
    </citation>
    <scope>NUCLEOTIDE SEQUENCE [LARGE SCALE GENOMIC DNA]</scope>
    <source>
        <strain>ATCC 700084 / mc(2)155</strain>
    </source>
</reference>
<keyword id="KW-0460">Magnesium</keyword>
<keyword id="KW-0479">Metal-binding</keyword>
<keyword id="KW-1185">Reference proteome</keyword>
<keyword id="KW-0784">Thiamine biosynthesis</keyword>
<keyword id="KW-0808">Transferase</keyword>
<name>THIE_MYCS2</name>
<accession>A0QQK7</accession>
<accession>I7G410</accession>
<proteinExistence type="inferred from homology"/>